<protein>
    <recommendedName>
        <fullName>Non-structural protein NP-1</fullName>
        <shortName>NP1</shortName>
    </recommendedName>
</protein>
<dbReference type="EMBL" id="DQ000496">
    <property type="protein sequence ID" value="AAY45701.1"/>
    <property type="molecule type" value="Genomic_DNA"/>
</dbReference>
<dbReference type="EMBL" id="GQ925675">
    <property type="protein sequence ID" value="ACX50494.1"/>
    <property type="molecule type" value="Genomic_DNA"/>
</dbReference>
<dbReference type="EMBL" id="JQ411251">
    <property type="protein sequence ID" value="AFC37602.1"/>
    <property type="molecule type" value="Genomic_DNA"/>
</dbReference>
<dbReference type="EMBL" id="JQ923422">
    <property type="protein sequence ID" value="AFR53041.1"/>
    <property type="molecule type" value="Genomic_DNA"/>
</dbReference>
<dbReference type="EMBL" id="JN632482">
    <property type="protein sequence ID" value="AEY82430.1"/>
    <property type="molecule type" value="Genomic_DNA"/>
</dbReference>
<dbReference type="EMBL" id="JN632483">
    <property type="protein sequence ID" value="AEY82431.1"/>
    <property type="molecule type" value="Genomic_DNA"/>
</dbReference>
<dbReference type="EMBL" id="JN632484">
    <property type="protein sequence ID" value="AEY82432.1"/>
    <property type="molecule type" value="Genomic_DNA"/>
</dbReference>
<dbReference type="EMBL" id="JN632485">
    <property type="protein sequence ID" value="AEY82433.1"/>
    <property type="molecule type" value="Genomic_DNA"/>
</dbReference>
<dbReference type="EMBL" id="JN632486">
    <property type="protein sequence ID" value="AEY82434.1"/>
    <property type="molecule type" value="Genomic_DNA"/>
</dbReference>
<dbReference type="EMBL" id="JN632487">
    <property type="protein sequence ID" value="AEY82435.1"/>
    <property type="molecule type" value="Genomic_DNA"/>
</dbReference>
<dbReference type="EMBL" id="JN632488">
    <property type="protein sequence ID" value="AEY82436.1"/>
    <property type="molecule type" value="Genomic_DNA"/>
</dbReference>
<dbReference type="EMBL" id="JN632489">
    <property type="protein sequence ID" value="AEY82437.1"/>
    <property type="molecule type" value="Genomic_DNA"/>
</dbReference>
<dbReference type="EMBL" id="JN632490">
    <property type="protein sequence ID" value="AEY82438.1"/>
    <property type="molecule type" value="Genomic_DNA"/>
</dbReference>
<dbReference type="EMBL" id="JN632491">
    <property type="protein sequence ID" value="AEY82439.1"/>
    <property type="molecule type" value="Genomic_DNA"/>
</dbReference>
<dbReference type="EMBL" id="JN632492">
    <property type="protein sequence ID" value="AEY82440.1"/>
    <property type="molecule type" value="Genomic_DNA"/>
</dbReference>
<dbReference type="EMBL" id="JN632493">
    <property type="protein sequence ID" value="AEY82441.1"/>
    <property type="molecule type" value="Genomic_DNA"/>
</dbReference>
<dbReference type="EMBL" id="JN632494">
    <property type="protein sequence ID" value="AEY82442.1"/>
    <property type="molecule type" value="Genomic_DNA"/>
</dbReference>
<dbReference type="EMBL" id="JN632495">
    <property type="protein sequence ID" value="AEY82443.1"/>
    <property type="molecule type" value="Genomic_DNA"/>
</dbReference>
<dbReference type="EMBL" id="JN632496">
    <property type="protein sequence ID" value="AEY82444.1"/>
    <property type="molecule type" value="Genomic_DNA"/>
</dbReference>
<dbReference type="EMBL" id="KC878501">
    <property type="protein sequence ID" value="AGR88363.1"/>
    <property type="molecule type" value="Genomic_DNA"/>
</dbReference>
<dbReference type="EMBL" id="KC878502">
    <property type="protein sequence ID" value="AGR88364.1"/>
    <property type="molecule type" value="Genomic_DNA"/>
</dbReference>
<dbReference type="EMBL" id="KC878503">
    <property type="protein sequence ID" value="AGR88365.1"/>
    <property type="molecule type" value="Genomic_DNA"/>
</dbReference>
<dbReference type="EMBL" id="KC878504">
    <property type="protein sequence ID" value="AGR88366.1"/>
    <property type="molecule type" value="Genomic_DNA"/>
</dbReference>
<dbReference type="EMBL" id="KC878505">
    <property type="protein sequence ID" value="AGR88367.1"/>
    <property type="molecule type" value="Genomic_DNA"/>
</dbReference>
<dbReference type="EMBL" id="KC878506">
    <property type="protein sequence ID" value="AGR88368.1"/>
    <property type="molecule type" value="Genomic_DNA"/>
</dbReference>
<dbReference type="EMBL" id="KC878507">
    <property type="protein sequence ID" value="AGR88369.1"/>
    <property type="molecule type" value="Genomic_DNA"/>
</dbReference>
<dbReference type="EMBL" id="KC878508">
    <property type="protein sequence ID" value="AGR88370.1"/>
    <property type="molecule type" value="Genomic_DNA"/>
</dbReference>
<dbReference type="EMBL" id="KC878509">
    <property type="protein sequence ID" value="AGR88371.1"/>
    <property type="molecule type" value="Genomic_DNA"/>
</dbReference>
<dbReference type="EMBL" id="KC878510">
    <property type="protein sequence ID" value="AGR88372.1"/>
    <property type="molecule type" value="Genomic_DNA"/>
</dbReference>
<dbReference type="EMBL" id="KJ634207">
    <property type="protein sequence ID" value="AIC76458.1"/>
    <property type="molecule type" value="Genomic_DNA"/>
</dbReference>
<dbReference type="EMBL" id="MG953829">
    <property type="protein sequence ID" value="AVI59245.1"/>
    <property type="molecule type" value="Genomic_DNA"/>
</dbReference>
<dbReference type="EMBL" id="MG953830">
    <property type="protein sequence ID" value="AVI59249.1"/>
    <property type="molecule type" value="Genomic_DNA"/>
</dbReference>
<dbReference type="EMBL" id="KY629423">
    <property type="protein sequence ID" value="ASS83770.1"/>
    <property type="molecule type" value="Genomic_DNA"/>
</dbReference>
<dbReference type="RefSeq" id="YP_338087.1">
    <property type="nucleotide sequence ID" value="NC_007455.1"/>
</dbReference>
<dbReference type="DNASU" id="3711586"/>
<dbReference type="GeneID" id="3711586"/>
<dbReference type="KEGG" id="vg:3711586"/>
<dbReference type="Proteomes" id="UP000101074">
    <property type="component" value="Genome"/>
</dbReference>
<dbReference type="Proteomes" id="UP000114321">
    <property type="component" value="Genome"/>
</dbReference>
<dbReference type="Proteomes" id="UP000118311">
    <property type="component" value="Segment"/>
</dbReference>
<dbReference type="Proteomes" id="UP000128269">
    <property type="component" value="Genome"/>
</dbReference>
<dbReference type="Proteomes" id="UP000140113">
    <property type="component" value="Segment"/>
</dbReference>
<dbReference type="GO" id="GO:0042025">
    <property type="term" value="C:host cell nucleus"/>
    <property type="evidence" value="ECO:0007669"/>
    <property type="project" value="UniProtKB-SubCell"/>
</dbReference>
<dbReference type="InterPro" id="IPR021075">
    <property type="entry name" value="Bocavirus_NP1"/>
</dbReference>
<dbReference type="Pfam" id="PF11733">
    <property type="entry name" value="NP1-WLL"/>
    <property type="match status" value="1"/>
</dbReference>
<keyword id="KW-0010">Activator</keyword>
<keyword id="KW-1048">Host nucleus</keyword>
<keyword id="KW-1185">Reference proteome</keyword>
<keyword id="KW-0804">Transcription</keyword>
<keyword id="KW-0805">Transcription regulation</keyword>
<organismHost>
    <name type="scientific">Homo sapiens</name>
    <name type="common">Human</name>
    <dbReference type="NCBI Taxonomy" id="9606"/>
</organismHost>
<reference key="1">
    <citation type="journal article" date="2005" name="Proc. Natl. Acad. Sci. U.S.A.">
        <title>Cloning of a human parvovirus by molecular screening of respiratory tract samples.</title>
        <authorList>
            <person name="Allander T."/>
            <person name="Tammi M.T."/>
            <person name="Eriksson M."/>
            <person name="Bjerkner A."/>
            <person name="Tiveljung-Lindell A."/>
            <person name="Andersson B."/>
        </authorList>
    </citation>
    <scope>NUCLEOTIDE SEQUENCE [LARGE SCALE GENOMIC DNA]</scope>
    <source>
        <strain evidence="7">St2</strain>
    </source>
</reference>
<reference key="2">
    <citation type="journal article" date="2012" name="PLoS Pathog.">
        <title>Establishment of a reverse genetics system for studying human bocavirus in human airway epithelia.</title>
        <authorList>
            <person name="Huang Q."/>
            <person name="Deng X."/>
            <person name="Yan Z."/>
            <person name="Cheng F."/>
            <person name="Luo Y."/>
            <person name="Shen W."/>
            <person name="Lei-Butters D.C."/>
            <person name="Chen A.Y."/>
            <person name="Li Y."/>
            <person name="Tang L."/>
            <person name="Soderlund-Venermo M."/>
            <person name="Engelhardt J.F."/>
            <person name="Qiu J."/>
        </authorList>
    </citation>
    <scope>NUCLEOTIDE SEQUENCE [LARGE SCALE GENOMIC DNA]</scope>
    <source>
        <strain evidence="23">KU3</strain>
        <strain evidence="24">Salvador1</strain>
    </source>
</reference>
<reference evidence="8" key="3">
    <citation type="journal article" date="2012" name="Braz. J. Infect. Dis.">
        <title>High prevalence of human bocavirus 1 in infants with lower acute respiratory tract disease in Argentina, 2007 - 2009.</title>
        <authorList>
            <person name="Ghietto L.M."/>
            <person name="Camara A."/>
            <person name="Zhou Y."/>
            <person name="Pedranti M."/>
            <person name="Ferreyra S."/>
            <person name="Frey T."/>
            <person name="Camara J."/>
            <person name="Adamo M.P."/>
        </authorList>
    </citation>
    <scope>NUCLEOTIDE SEQUENCE</scope>
    <source>
        <strain evidence="13">131_HP_AR07</strain>
        <strain evidence="12">132_HP_AR07</strain>
        <strain evidence="21">146_RT_AR07</strain>
        <strain evidence="19">256_HP_AR09</strain>
        <strain evidence="18">260_HP_AR09</strain>
        <strain evidence="17">307_HP_AR09</strain>
        <strain evidence="20">320_HP_AR09</strain>
        <strain evidence="8">326_HP_AR09</strain>
        <strain evidence="16">327_HP_AR09</strain>
        <strain evidence="22">359_HP_AR09</strain>
        <strain evidence="14">366_HP_AR09</strain>
        <strain evidence="9">398_HP_AR09</strain>
        <strain evidence="15">414_SF_AR09</strain>
        <strain evidence="10">462_HP_AR09</strain>
        <strain evidence="11">488_HP_AR09</strain>
    </source>
</reference>
<reference evidence="25" key="4">
    <citation type="submission" date="2013-04" db="EMBL/GenBank/DDBJ databases">
        <title>Prevalence of human bocavirus in children with lower acute respiratory disease in Cordoba, Argentina 2012.</title>
        <authorList>
            <person name="Ghietto L.M."/>
            <person name="Adamo M.P."/>
        </authorList>
    </citation>
    <scope>NUCLEOTIDE SEQUENCE</scope>
    <source>
        <strain evidence="25">3192_HN_12</strain>
        <strain evidence="26">3194_HN_12</strain>
        <strain evidence="27">3268_HN_12</strain>
        <strain evidence="28">3270_HN_12</strain>
        <strain evidence="29">3273_HN_12</strain>
        <strain evidence="30">3292_HN_12</strain>
        <strain evidence="31">3311_HN_12</strain>
        <strain evidence="32">3317_HN_12</strain>
        <strain evidence="33">3353_HN_12</strain>
        <strain evidence="34">3476_HN_12</strain>
    </source>
</reference>
<reference evidence="35 39" key="5">
    <citation type="submission" date="2014-03" db="EMBL/GenBank/DDBJ databases">
        <title>Complete genome sequence of HBoV1 isolated form a child with pneumonia in Cordoba, Argentina.</title>
        <authorList>
            <person name="Cardozo Tomas A."/>
            <person name="Ghietto L.M."/>
            <person name="Insfran C."/>
            <person name="Adamo M.P."/>
        </authorList>
    </citation>
    <scope>NUCLEOTIDE SEQUENCE [LARGE SCALE GENOMIC DNA]</scope>
    <source>
        <strain evidence="35">307AR09</strain>
    </source>
</reference>
<reference key="6">
    <citation type="journal article" date="2017" name="Virology">
        <title>Human bocavirus 1 infection of CACO-2 cell line cultures.</title>
        <authorList>
            <person name="Ghietto L.M."/>
            <person name="Toigo D'Angelo A.P."/>
            <person name="Viale F.A."/>
            <person name="Adamo M.P."/>
        </authorList>
    </citation>
    <scope>NUCLEOTIDE SEQUENCE [LARGE SCALE GENOMIC DNA]</scope>
    <source>
        <strain evidence="36">HBoV1s6</strain>
    </source>
</reference>
<reference evidence="37" key="7">
    <citation type="journal article" date="2018" name="Genome Announc.">
        <title>Complete Genome Sequences of Six Human Bocavirus Strains from Patients with Acute Gastroenteritis in the North Region of Brazil.</title>
        <authorList>
            <person name="Watanabe A.S.A."/>
            <person name="Luchs A."/>
            <person name="Leal E."/>
            <person name="Milagres F.A.P."/>
            <person name="Komninakis S.V."/>
            <person name="Gill D.E."/>
            <person name="Lobato M.C.A.B.S."/>
            <person name="Brustulin R."/>
            <person name="das Chagas R.T."/>
            <person name="Abrao M.F.N.D.S."/>
            <person name="Soares C.V.D.A."/>
            <person name="Deng X."/>
            <person name="Sabino E.C."/>
            <person name="Delwart E."/>
            <person name="da Costa A.C."/>
        </authorList>
    </citation>
    <scope>NUCLEOTIDE SEQUENCE</scope>
    <source>
        <strain evidence="37">HBoV-1/BRA/PA-160/Brazil/2015</strain>
        <strain evidence="38">HBoV-1/BRA/TO-142/Brazil/2014</strain>
    </source>
</reference>
<reference key="8">
    <citation type="journal article" date="2010" name="Virology">
        <title>Characterization of the gene expression profile of human bocavirus.</title>
        <authorList>
            <person name="Chen A.Y."/>
            <person name="Cheng F."/>
            <person name="Lou S."/>
            <person name="Luo Y."/>
            <person name="Liu Z."/>
            <person name="Delwart E."/>
            <person name="Pintel D."/>
            <person name="Qiu J."/>
        </authorList>
    </citation>
    <scope>SUBCELLULAR LOCATION</scope>
    <source>
        <strain>KU2</strain>
    </source>
</reference>
<reference key="9">
    <citation type="journal article" date="2013" name="Virol. J.">
        <title>Key elements of the human bocavirus type 1 (HBoV1) promoter and its trans-activation by NS1 protein.</title>
        <authorList>
            <person name="Li J."/>
            <person name="Yang Y."/>
            <person name="Dong Y."/>
            <person name="Li Y."/>
            <person name="Huang Y."/>
            <person name="Yi Q."/>
            <person name="Liu K."/>
            <person name="Li Y."/>
        </authorList>
    </citation>
    <scope>FUNCTION</scope>
</reference>
<reference key="10">
    <citation type="journal article" date="2013" name="J. Gen. Virol.">
        <title>Identification and characterization of complex dual nuclear localization signals in human bocavirus NP1: identification and characterization of complex dual nuclear localization signals in human bocavirus NP1.</title>
        <authorList>
            <person name="Li Q."/>
            <person name="Zhang Z."/>
            <person name="Zheng Z."/>
            <person name="Ke X."/>
            <person name="Luo H."/>
            <person name="Hu Q."/>
            <person name="Wang H."/>
        </authorList>
    </citation>
    <scope>NUCLEAR LOCALIZATION SIGNAL</scope>
    <scope>SUBCELLULAR LOCATION</scope>
    <scope>MUTAGENESIS OF 14-LYS--LYS-16 AND 24-ARG--ARG-26</scope>
</reference>
<reference key="11">
    <citation type="journal article" date="2016" name="J. Virol.">
        <title>Nonstructural Protein NP1 of Human Bocavirus 1 Plays a Critical Role in the Expression of Viral Capsid Proteins.</title>
        <authorList>
            <person name="Zou W."/>
            <person name="Cheng F."/>
            <person name="Shen W."/>
            <person name="Engelhardt J.F."/>
            <person name="Yan Z."/>
            <person name="Qiu J."/>
        </authorList>
    </citation>
    <scope>FUNCTION</scope>
    <scope>DISRUPTION PHENOTYPE</scope>
</reference>
<evidence type="ECO:0000256" key="1">
    <source>
        <dbReference type="SAM" id="MobiDB-lite"/>
    </source>
</evidence>
<evidence type="ECO:0000269" key="2">
    <source>
    </source>
</evidence>
<evidence type="ECO:0000269" key="3">
    <source>
    </source>
</evidence>
<evidence type="ECO:0000269" key="4">
    <source>
    </source>
</evidence>
<evidence type="ECO:0000269" key="5">
    <source>
    </source>
</evidence>
<evidence type="ECO:0000305" key="6"/>
<evidence type="ECO:0000312" key="7">
    <source>
        <dbReference type="EMBL" id="AAY45701.1"/>
    </source>
</evidence>
<evidence type="ECO:0000312" key="8">
    <source>
        <dbReference type="EMBL" id="AEY82430.1"/>
    </source>
</evidence>
<evidence type="ECO:0000312" key="9">
    <source>
        <dbReference type="EMBL" id="AEY82431.1"/>
    </source>
</evidence>
<evidence type="ECO:0000312" key="10">
    <source>
        <dbReference type="EMBL" id="AEY82432.1"/>
    </source>
</evidence>
<evidence type="ECO:0000312" key="11">
    <source>
        <dbReference type="EMBL" id="AEY82433.1"/>
    </source>
</evidence>
<evidence type="ECO:0000312" key="12">
    <source>
        <dbReference type="EMBL" id="AEY82434.1"/>
    </source>
</evidence>
<evidence type="ECO:0000312" key="13">
    <source>
        <dbReference type="EMBL" id="AEY82435.1"/>
    </source>
</evidence>
<evidence type="ECO:0000312" key="14">
    <source>
        <dbReference type="EMBL" id="AEY82436.1"/>
    </source>
</evidence>
<evidence type="ECO:0000312" key="15">
    <source>
        <dbReference type="EMBL" id="AEY82437.1"/>
    </source>
</evidence>
<evidence type="ECO:0000312" key="16">
    <source>
        <dbReference type="EMBL" id="AEY82438.1"/>
    </source>
</evidence>
<evidence type="ECO:0000312" key="17">
    <source>
        <dbReference type="EMBL" id="AEY82439.1"/>
    </source>
</evidence>
<evidence type="ECO:0000312" key="18">
    <source>
        <dbReference type="EMBL" id="AEY82440.1"/>
    </source>
</evidence>
<evidence type="ECO:0000312" key="19">
    <source>
        <dbReference type="EMBL" id="AEY82441.1"/>
    </source>
</evidence>
<evidence type="ECO:0000312" key="20">
    <source>
        <dbReference type="EMBL" id="AEY82442.1"/>
    </source>
</evidence>
<evidence type="ECO:0000312" key="21">
    <source>
        <dbReference type="EMBL" id="AEY82443.1"/>
    </source>
</evidence>
<evidence type="ECO:0000312" key="22">
    <source>
        <dbReference type="EMBL" id="AEY82444.1"/>
    </source>
</evidence>
<evidence type="ECO:0000312" key="23">
    <source>
        <dbReference type="EMBL" id="AFC37602.1"/>
    </source>
</evidence>
<evidence type="ECO:0000312" key="24">
    <source>
        <dbReference type="EMBL" id="AFR53041.1"/>
    </source>
</evidence>
<evidence type="ECO:0000312" key="25">
    <source>
        <dbReference type="EMBL" id="AGR88363.1"/>
    </source>
</evidence>
<evidence type="ECO:0000312" key="26">
    <source>
        <dbReference type="EMBL" id="AGR88364.1"/>
    </source>
</evidence>
<evidence type="ECO:0000312" key="27">
    <source>
        <dbReference type="EMBL" id="AGR88365.1"/>
    </source>
</evidence>
<evidence type="ECO:0000312" key="28">
    <source>
        <dbReference type="EMBL" id="AGR88366.1"/>
    </source>
</evidence>
<evidence type="ECO:0000312" key="29">
    <source>
        <dbReference type="EMBL" id="AGR88367.1"/>
    </source>
</evidence>
<evidence type="ECO:0000312" key="30">
    <source>
        <dbReference type="EMBL" id="AGR88368.1"/>
    </source>
</evidence>
<evidence type="ECO:0000312" key="31">
    <source>
        <dbReference type="EMBL" id="AGR88369.1"/>
    </source>
</evidence>
<evidence type="ECO:0000312" key="32">
    <source>
        <dbReference type="EMBL" id="AGR88370.1"/>
    </source>
</evidence>
<evidence type="ECO:0000312" key="33">
    <source>
        <dbReference type="EMBL" id="AGR88371.1"/>
    </source>
</evidence>
<evidence type="ECO:0000312" key="34">
    <source>
        <dbReference type="EMBL" id="AGR88372.1"/>
    </source>
</evidence>
<evidence type="ECO:0000312" key="35">
    <source>
        <dbReference type="EMBL" id="AIC76458.1"/>
    </source>
</evidence>
<evidence type="ECO:0000312" key="36">
    <source>
        <dbReference type="EMBL" id="ASS83770.1"/>
    </source>
</evidence>
<evidence type="ECO:0000312" key="37">
    <source>
        <dbReference type="EMBL" id="AVI59245.1"/>
    </source>
</evidence>
<evidence type="ECO:0000312" key="38">
    <source>
        <dbReference type="EMBL" id="AVI59249.1"/>
    </source>
</evidence>
<evidence type="ECO:0000312" key="39">
    <source>
        <dbReference type="Proteomes" id="UP000128269"/>
    </source>
</evidence>
<feature type="chain" id="PRO_0000445637" description="Non-structural protein NP-1">
    <location>
        <begin position="1"/>
        <end position="219"/>
    </location>
</feature>
<feature type="region of interest" description="Disordered" evidence="1">
    <location>
        <begin position="1"/>
        <end position="90"/>
    </location>
</feature>
<feature type="region of interest" description="Nuclear localization signal" evidence="3">
    <location>
        <begin position="7"/>
        <end position="50"/>
    </location>
</feature>
<feature type="compositionally biased region" description="Basic residues" evidence="1">
    <location>
        <begin position="24"/>
        <end position="41"/>
    </location>
</feature>
<feature type="compositionally biased region" description="Polar residues" evidence="1">
    <location>
        <begin position="60"/>
        <end position="73"/>
    </location>
</feature>
<feature type="compositionally biased region" description="Basic and acidic residues" evidence="1">
    <location>
        <begin position="74"/>
        <end position="87"/>
    </location>
</feature>
<feature type="mutagenesis site" description="Complete loss of nuclear localization." evidence="3">
    <original>KRK</original>
    <variation>AAA</variation>
    <location>
        <begin position="14"/>
        <end position="16"/>
    </location>
</feature>
<feature type="mutagenesis site" description="Complete loss of nuclear localization." evidence="3">
    <original>RKR</original>
    <variation>AAA</variation>
    <location>
        <begin position="24"/>
        <end position="26"/>
    </location>
</feature>
<organism>
    <name type="scientific">Primate bocaparvovirus 1 (strain Human bocavirus 1 type 1)</name>
    <name type="common">HBoV1</name>
    <name type="synonym">Human bocavirus type 1</name>
    <dbReference type="NCBI Taxonomy" id="689403"/>
    <lineage>
        <taxon>Viruses</taxon>
        <taxon>Monodnaviria</taxon>
        <taxon>Shotokuvirae</taxon>
        <taxon>Cossaviricota</taxon>
        <taxon>Quintoviricetes</taxon>
        <taxon>Piccovirales</taxon>
        <taxon>Parvoviridae</taxon>
        <taxon>Parvovirinae</taxon>
        <taxon>Bocaparvovirus</taxon>
        <taxon>Bocaparvovirus primate1</taxon>
    </lineage>
</organism>
<sequence>MSSGNMKDKHRSYKRKGSPERGERKRHWQTTHHRSRSRSPIRHSGERGSGSYHQEHPISHLSSCTASKTSDQVMKTRESTSGKKDNRTNPYTVFSQHRASNPEAPGWCGFYWHSTRIARDGTNSIFNEMKQQFQQLQIDNKIGWDNTRELLFNQKKTLDQKYRNMFWHFRNNSDCERCNYWDDVYRRHLANVSSQTEADEITDEEMLSAAESMEADASN</sequence>
<gene>
    <name type="primary">NP1</name>
    <name type="synonym">NP-1</name>
</gene>
<comment type="function">
    <text evidence="4 5">Required for the expression of the capsid proteins. Performs the splicing and internal polyadenylation of the viral capsid-encoding mRNA precursor, which allows its maturation and expression (PubMed:26912614). Transactivates the viral promoter (PubMed:24161033).</text>
</comment>
<comment type="subcellular location">
    <subcellularLocation>
        <location evidence="2 3">Host nucleus</location>
    </subcellularLocation>
</comment>
<comment type="disruption phenotype">
    <text evidence="5">Abolishes viral capsid-encoding mRNAs in the host cytoplasm with concomitant loss of expression of the capsid proteins.</text>
</comment>
<comment type="similarity">
    <text evidence="6">Belongs to the Bocaparvovirus Non-structural protein NP-1 family.</text>
</comment>
<proteinExistence type="evidence at protein level"/>
<accession>Q3YPH5</accession>
<accession>A0A068B6A8</accession>
<accession>A0A223DPG6</accession>
<accession>A0A341ZMH7</accession>
<accession>H6U986</accession>
<name>NP1_HBOC1</name>